<dbReference type="EMBL" id="CU329672">
    <property type="protein sequence ID" value="CAB52159.1"/>
    <property type="molecule type" value="Genomic_DNA"/>
</dbReference>
<dbReference type="EMBL" id="AB027989">
    <property type="protein sequence ID" value="BAA87293.1"/>
    <property type="molecule type" value="Genomic_DNA"/>
</dbReference>
<dbReference type="PIR" id="T41012">
    <property type="entry name" value="T41012"/>
</dbReference>
<dbReference type="RefSeq" id="NP_587942.1">
    <property type="nucleotide sequence ID" value="NM_001022933.2"/>
</dbReference>
<dbReference type="SMR" id="O74414"/>
<dbReference type="FunCoup" id="O74414">
    <property type="interactions" value="245"/>
</dbReference>
<dbReference type="STRING" id="284812.O74414"/>
<dbReference type="iPTMnet" id="O74414"/>
<dbReference type="PaxDb" id="4896-SPCC14G10.01.1"/>
<dbReference type="EnsemblFungi" id="SPCC14G10.01.1">
    <property type="protein sequence ID" value="SPCC14G10.01.1:pep"/>
    <property type="gene ID" value="SPCC14G10.01"/>
</dbReference>
<dbReference type="GeneID" id="2538759"/>
<dbReference type="KEGG" id="spo:2538759"/>
<dbReference type="PomBase" id="SPCC14G10.01"/>
<dbReference type="VEuPathDB" id="FungiDB:SPCC14G10.01"/>
<dbReference type="eggNOG" id="KOG3220">
    <property type="taxonomic scope" value="Eukaryota"/>
</dbReference>
<dbReference type="HOGENOM" id="CLU_057180_0_1_1"/>
<dbReference type="InParanoid" id="O74414"/>
<dbReference type="OMA" id="CQMDIEQ"/>
<dbReference type="PhylomeDB" id="O74414"/>
<dbReference type="Reactome" id="R-SPO-196783">
    <property type="pathway name" value="Coenzyme A biosynthesis"/>
</dbReference>
<dbReference type="PRO" id="PR:O74414"/>
<dbReference type="Proteomes" id="UP000002485">
    <property type="component" value="Chromosome III"/>
</dbReference>
<dbReference type="GO" id="GO:0005737">
    <property type="term" value="C:cytoplasm"/>
    <property type="evidence" value="ECO:0007005"/>
    <property type="project" value="PomBase"/>
</dbReference>
<dbReference type="GO" id="GO:0005739">
    <property type="term" value="C:mitochondrion"/>
    <property type="evidence" value="ECO:0000266"/>
    <property type="project" value="PomBase"/>
</dbReference>
<dbReference type="GO" id="GO:0005524">
    <property type="term" value="F:ATP binding"/>
    <property type="evidence" value="ECO:0000255"/>
    <property type="project" value="PomBase"/>
</dbReference>
<dbReference type="GO" id="GO:0004140">
    <property type="term" value="F:dephospho-CoA kinase activity"/>
    <property type="evidence" value="ECO:0000318"/>
    <property type="project" value="GO_Central"/>
</dbReference>
<dbReference type="GO" id="GO:0015937">
    <property type="term" value="P:coenzyme A biosynthetic process"/>
    <property type="evidence" value="ECO:0000318"/>
    <property type="project" value="GO_Central"/>
</dbReference>
<dbReference type="CDD" id="cd02022">
    <property type="entry name" value="DPCK"/>
    <property type="match status" value="1"/>
</dbReference>
<dbReference type="FunFam" id="3.40.50.300:FF:000485">
    <property type="entry name" value="Dephospho-CoA kinase CAB5"/>
    <property type="match status" value="1"/>
</dbReference>
<dbReference type="Gene3D" id="3.40.50.300">
    <property type="entry name" value="P-loop containing nucleotide triphosphate hydrolases"/>
    <property type="match status" value="1"/>
</dbReference>
<dbReference type="HAMAP" id="MF_00376">
    <property type="entry name" value="Dephospho_CoA_kinase"/>
    <property type="match status" value="1"/>
</dbReference>
<dbReference type="InterPro" id="IPR001977">
    <property type="entry name" value="Depp_CoAkinase"/>
</dbReference>
<dbReference type="InterPro" id="IPR027417">
    <property type="entry name" value="P-loop_NTPase"/>
</dbReference>
<dbReference type="NCBIfam" id="TIGR00152">
    <property type="entry name" value="dephospho-CoA kinase"/>
    <property type="match status" value="1"/>
</dbReference>
<dbReference type="PANTHER" id="PTHR10695:SF46">
    <property type="entry name" value="BIFUNCTIONAL COENZYME A SYNTHASE-RELATED"/>
    <property type="match status" value="1"/>
</dbReference>
<dbReference type="PANTHER" id="PTHR10695">
    <property type="entry name" value="DEPHOSPHO-COA KINASE-RELATED"/>
    <property type="match status" value="1"/>
</dbReference>
<dbReference type="Pfam" id="PF01121">
    <property type="entry name" value="CoaE"/>
    <property type="match status" value="1"/>
</dbReference>
<dbReference type="SUPFAM" id="SSF52540">
    <property type="entry name" value="P-loop containing nucleoside triphosphate hydrolases"/>
    <property type="match status" value="1"/>
</dbReference>
<dbReference type="PROSITE" id="PS51219">
    <property type="entry name" value="DPCK"/>
    <property type="match status" value="1"/>
</dbReference>
<protein>
    <recommendedName>
        <fullName>Uncharacterized protein C14G10.01</fullName>
    </recommendedName>
</protein>
<keyword id="KW-0067">ATP-binding</keyword>
<keyword id="KW-0963">Cytoplasm</keyword>
<keyword id="KW-0547">Nucleotide-binding</keyword>
<keyword id="KW-0597">Phosphoprotein</keyword>
<keyword id="KW-1185">Reference proteome</keyword>
<name>YJL1_SCHPO</name>
<organism>
    <name type="scientific">Schizosaccharomyces pombe (strain 972 / ATCC 24843)</name>
    <name type="common">Fission yeast</name>
    <dbReference type="NCBI Taxonomy" id="284812"/>
    <lineage>
        <taxon>Eukaryota</taxon>
        <taxon>Fungi</taxon>
        <taxon>Dikarya</taxon>
        <taxon>Ascomycota</taxon>
        <taxon>Taphrinomycotina</taxon>
        <taxon>Schizosaccharomycetes</taxon>
        <taxon>Schizosaccharomycetales</taxon>
        <taxon>Schizosaccharomycetaceae</taxon>
        <taxon>Schizosaccharomyces</taxon>
    </lineage>
</organism>
<reference key="1">
    <citation type="journal article" date="2002" name="Nature">
        <title>The genome sequence of Schizosaccharomyces pombe.</title>
        <authorList>
            <person name="Wood V."/>
            <person name="Gwilliam R."/>
            <person name="Rajandream M.A."/>
            <person name="Lyne M.H."/>
            <person name="Lyne R."/>
            <person name="Stewart A."/>
            <person name="Sgouros J.G."/>
            <person name="Peat N."/>
            <person name="Hayles J."/>
            <person name="Baker S.G."/>
            <person name="Basham D."/>
            <person name="Bowman S."/>
            <person name="Brooks K."/>
            <person name="Brown D."/>
            <person name="Brown S."/>
            <person name="Chillingworth T."/>
            <person name="Churcher C.M."/>
            <person name="Collins M."/>
            <person name="Connor R."/>
            <person name="Cronin A."/>
            <person name="Davis P."/>
            <person name="Feltwell T."/>
            <person name="Fraser A."/>
            <person name="Gentles S."/>
            <person name="Goble A."/>
            <person name="Hamlin N."/>
            <person name="Harris D.E."/>
            <person name="Hidalgo J."/>
            <person name="Hodgson G."/>
            <person name="Holroyd S."/>
            <person name="Hornsby T."/>
            <person name="Howarth S."/>
            <person name="Huckle E.J."/>
            <person name="Hunt S."/>
            <person name="Jagels K."/>
            <person name="James K.D."/>
            <person name="Jones L."/>
            <person name="Jones M."/>
            <person name="Leather S."/>
            <person name="McDonald S."/>
            <person name="McLean J."/>
            <person name="Mooney P."/>
            <person name="Moule S."/>
            <person name="Mungall K.L."/>
            <person name="Murphy L.D."/>
            <person name="Niblett D."/>
            <person name="Odell C."/>
            <person name="Oliver K."/>
            <person name="O'Neil S."/>
            <person name="Pearson D."/>
            <person name="Quail M.A."/>
            <person name="Rabbinowitsch E."/>
            <person name="Rutherford K.M."/>
            <person name="Rutter S."/>
            <person name="Saunders D."/>
            <person name="Seeger K."/>
            <person name="Sharp S."/>
            <person name="Skelton J."/>
            <person name="Simmonds M.N."/>
            <person name="Squares R."/>
            <person name="Squares S."/>
            <person name="Stevens K."/>
            <person name="Taylor K."/>
            <person name="Taylor R.G."/>
            <person name="Tivey A."/>
            <person name="Walsh S.V."/>
            <person name="Warren T."/>
            <person name="Whitehead S."/>
            <person name="Woodward J.R."/>
            <person name="Volckaert G."/>
            <person name="Aert R."/>
            <person name="Robben J."/>
            <person name="Grymonprez B."/>
            <person name="Weltjens I."/>
            <person name="Vanstreels E."/>
            <person name="Rieger M."/>
            <person name="Schaefer M."/>
            <person name="Mueller-Auer S."/>
            <person name="Gabel C."/>
            <person name="Fuchs M."/>
            <person name="Duesterhoeft A."/>
            <person name="Fritzc C."/>
            <person name="Holzer E."/>
            <person name="Moestl D."/>
            <person name="Hilbert H."/>
            <person name="Borzym K."/>
            <person name="Langer I."/>
            <person name="Beck A."/>
            <person name="Lehrach H."/>
            <person name="Reinhardt R."/>
            <person name="Pohl T.M."/>
            <person name="Eger P."/>
            <person name="Zimmermann W."/>
            <person name="Wedler H."/>
            <person name="Wambutt R."/>
            <person name="Purnelle B."/>
            <person name="Goffeau A."/>
            <person name="Cadieu E."/>
            <person name="Dreano S."/>
            <person name="Gloux S."/>
            <person name="Lelaure V."/>
            <person name="Mottier S."/>
            <person name="Galibert F."/>
            <person name="Aves S.J."/>
            <person name="Xiang Z."/>
            <person name="Hunt C."/>
            <person name="Moore K."/>
            <person name="Hurst S.M."/>
            <person name="Lucas M."/>
            <person name="Rochet M."/>
            <person name="Gaillardin C."/>
            <person name="Tallada V.A."/>
            <person name="Garzon A."/>
            <person name="Thode G."/>
            <person name="Daga R.R."/>
            <person name="Cruzado L."/>
            <person name="Jimenez J."/>
            <person name="Sanchez M."/>
            <person name="del Rey F."/>
            <person name="Benito J."/>
            <person name="Dominguez A."/>
            <person name="Revuelta J.L."/>
            <person name="Moreno S."/>
            <person name="Armstrong J."/>
            <person name="Forsburg S.L."/>
            <person name="Cerutti L."/>
            <person name="Lowe T."/>
            <person name="McCombie W.R."/>
            <person name="Paulsen I."/>
            <person name="Potashkin J."/>
            <person name="Shpakovski G.V."/>
            <person name="Ussery D."/>
            <person name="Barrell B.G."/>
            <person name="Nurse P."/>
        </authorList>
    </citation>
    <scope>NUCLEOTIDE SEQUENCE [LARGE SCALE GENOMIC DNA]</scope>
    <source>
        <strain>972 / ATCC 24843</strain>
    </source>
</reference>
<reference key="2">
    <citation type="journal article" date="2000" name="Genes Cells">
        <title>Large-scale screening of intracellular protein localization in living fission yeast cells by the use of a GFP-fusion genomic DNA library.</title>
        <authorList>
            <person name="Ding D.-Q."/>
            <person name="Tomita Y."/>
            <person name="Yamamoto A."/>
            <person name="Chikashige Y."/>
            <person name="Haraguchi T."/>
            <person name="Hiraoka Y."/>
        </authorList>
    </citation>
    <scope>NUCLEOTIDE SEQUENCE [LARGE SCALE GENOMIC DNA] OF 13-182</scope>
    <scope>SUBCELLULAR LOCATION</scope>
    <source>
        <strain>ATCC 38364 / 968</strain>
    </source>
</reference>
<reference key="3">
    <citation type="journal article" date="2008" name="J. Proteome Res.">
        <title>Phosphoproteome analysis of fission yeast.</title>
        <authorList>
            <person name="Wilson-Grady J.T."/>
            <person name="Villen J."/>
            <person name="Gygi S.P."/>
        </authorList>
    </citation>
    <scope>PHOSPHORYLATION [LARGE SCALE ANALYSIS] AT SER-82 AND SER-86</scope>
    <scope>IDENTIFICATION BY MASS SPECTROMETRY</scope>
</reference>
<comment type="subcellular location">
    <subcellularLocation>
        <location evidence="2">Cytoplasm</location>
    </subcellularLocation>
</comment>
<comment type="similarity">
    <text evidence="4">Belongs to the CoaE family.</text>
</comment>
<proteinExistence type="evidence at protein level"/>
<sequence length="236" mass="26829">MLILGLTGSIATGKSTVSREFQEKYHIKIIDADVLARKVVEPNTPCLIKIQKEFGNEVLHEDGTLNRAKLGQAVFQDAGKRSLLNSIIHPAVRLEMLKELLRCYVRGYSIVILDVPLLFEAKMQFICWKTICVSCDKSIQKQRLLARNPELTAEDAENRVQAQMPLELKCQLADIVIENNSDLETLYENIHNVLPLITPSYFFTLLCLILPPLQITLQVIAFVSQKKKVSEFRKHI</sequence>
<accession>O74414</accession>
<accession>Q9US80</accession>
<gene>
    <name type="ORF">SPCC14G10.01</name>
    <name type="ORF">SPCC18B5.12</name>
</gene>
<feature type="chain" id="PRO_0000173042" description="Uncharacterized protein C14G10.01">
    <location>
        <begin position="1"/>
        <end position="236"/>
    </location>
</feature>
<feature type="domain" description="DPCK">
    <location>
        <begin position="3"/>
        <end position="208"/>
    </location>
</feature>
<feature type="binding site" evidence="1">
    <location>
        <begin position="8"/>
        <end position="15"/>
    </location>
    <ligand>
        <name>ATP</name>
        <dbReference type="ChEBI" id="CHEBI:30616"/>
    </ligand>
</feature>
<feature type="modified residue" description="Phosphoserine" evidence="3">
    <location>
        <position position="82"/>
    </location>
</feature>
<feature type="modified residue" description="Phosphoserine" evidence="3">
    <location>
        <position position="86"/>
    </location>
</feature>
<evidence type="ECO:0000255" key="1"/>
<evidence type="ECO:0000269" key="2">
    <source>
    </source>
</evidence>
<evidence type="ECO:0000269" key="3">
    <source>
    </source>
</evidence>
<evidence type="ECO:0000305" key="4"/>